<keyword id="KW-0004">4Fe-4S</keyword>
<keyword id="KW-0408">Iron</keyword>
<keyword id="KW-0411">Iron-sulfur</keyword>
<keyword id="KW-0479">Metal-binding</keyword>
<keyword id="KW-0489">Methyltransferase</keyword>
<keyword id="KW-1185">Reference proteome</keyword>
<keyword id="KW-0949">S-adenosyl-L-methionine</keyword>
<keyword id="KW-0808">Transferase</keyword>
<feature type="chain" id="PRO_0000162006" description="Uncharacterized RNA methyltransferase pc0248">
    <location>
        <begin position="1"/>
        <end position="434"/>
    </location>
</feature>
<feature type="domain" description="TRAM" evidence="2">
    <location>
        <begin position="4"/>
        <end position="62"/>
    </location>
</feature>
<feature type="active site" description="Nucleophile" evidence="3">
    <location>
        <position position="391"/>
    </location>
</feature>
<feature type="binding site" evidence="1">
    <location>
        <position position="75"/>
    </location>
    <ligand>
        <name>[4Fe-4S] cluster</name>
        <dbReference type="ChEBI" id="CHEBI:49883"/>
    </ligand>
</feature>
<feature type="binding site" evidence="1">
    <location>
        <position position="81"/>
    </location>
    <ligand>
        <name>[4Fe-4S] cluster</name>
        <dbReference type="ChEBI" id="CHEBI:49883"/>
    </ligand>
</feature>
<feature type="binding site" evidence="1">
    <location>
        <position position="84"/>
    </location>
    <ligand>
        <name>[4Fe-4S] cluster</name>
        <dbReference type="ChEBI" id="CHEBI:49883"/>
    </ligand>
</feature>
<feature type="binding site" evidence="1">
    <location>
        <position position="161"/>
    </location>
    <ligand>
        <name>[4Fe-4S] cluster</name>
        <dbReference type="ChEBI" id="CHEBI:49883"/>
    </ligand>
</feature>
<feature type="binding site" evidence="3">
    <location>
        <position position="266"/>
    </location>
    <ligand>
        <name>S-adenosyl-L-methionine</name>
        <dbReference type="ChEBI" id="CHEBI:59789"/>
    </ligand>
</feature>
<feature type="binding site" evidence="3">
    <location>
        <position position="295"/>
    </location>
    <ligand>
        <name>S-adenosyl-L-methionine</name>
        <dbReference type="ChEBI" id="CHEBI:59789"/>
    </ligand>
</feature>
<feature type="binding site" evidence="3">
    <location>
        <position position="316"/>
    </location>
    <ligand>
        <name>S-adenosyl-L-methionine</name>
        <dbReference type="ChEBI" id="CHEBI:59789"/>
    </ligand>
</feature>
<feature type="binding site" evidence="3">
    <location>
        <position position="364"/>
    </location>
    <ligand>
        <name>S-adenosyl-L-methionine</name>
        <dbReference type="ChEBI" id="CHEBI:59789"/>
    </ligand>
</feature>
<dbReference type="EC" id="2.1.1.-"/>
<dbReference type="EMBL" id="BX908798">
    <property type="protein sequence ID" value="CAF22972.1"/>
    <property type="molecule type" value="Genomic_DNA"/>
</dbReference>
<dbReference type="RefSeq" id="WP_011174798.1">
    <property type="nucleotide sequence ID" value="NC_005861.2"/>
</dbReference>
<dbReference type="SMR" id="Q6MEM7"/>
<dbReference type="STRING" id="264201.pc0248"/>
<dbReference type="KEGG" id="pcu:PC_RS01205"/>
<dbReference type="eggNOG" id="COG2265">
    <property type="taxonomic scope" value="Bacteria"/>
</dbReference>
<dbReference type="HOGENOM" id="CLU_014689_7_0_0"/>
<dbReference type="OrthoDB" id="9804590at2"/>
<dbReference type="Proteomes" id="UP000000529">
    <property type="component" value="Chromosome"/>
</dbReference>
<dbReference type="GO" id="GO:0051539">
    <property type="term" value="F:4 iron, 4 sulfur cluster binding"/>
    <property type="evidence" value="ECO:0007669"/>
    <property type="project" value="UniProtKB-KW"/>
</dbReference>
<dbReference type="GO" id="GO:0046872">
    <property type="term" value="F:metal ion binding"/>
    <property type="evidence" value="ECO:0007669"/>
    <property type="project" value="UniProtKB-KW"/>
</dbReference>
<dbReference type="GO" id="GO:0008173">
    <property type="term" value="F:RNA methyltransferase activity"/>
    <property type="evidence" value="ECO:0007669"/>
    <property type="project" value="InterPro"/>
</dbReference>
<dbReference type="GO" id="GO:0032259">
    <property type="term" value="P:methylation"/>
    <property type="evidence" value="ECO:0007669"/>
    <property type="project" value="UniProtKB-KW"/>
</dbReference>
<dbReference type="GO" id="GO:0006396">
    <property type="term" value="P:RNA processing"/>
    <property type="evidence" value="ECO:0007669"/>
    <property type="project" value="InterPro"/>
</dbReference>
<dbReference type="CDD" id="cd02440">
    <property type="entry name" value="AdoMet_MTases"/>
    <property type="match status" value="1"/>
</dbReference>
<dbReference type="Gene3D" id="2.40.50.1070">
    <property type="match status" value="1"/>
</dbReference>
<dbReference type="Gene3D" id="2.40.50.140">
    <property type="entry name" value="Nucleic acid-binding proteins"/>
    <property type="match status" value="1"/>
</dbReference>
<dbReference type="Gene3D" id="3.40.50.150">
    <property type="entry name" value="Vaccinia Virus protein VP39"/>
    <property type="match status" value="1"/>
</dbReference>
<dbReference type="InterPro" id="IPR030390">
    <property type="entry name" value="MeTrfase_TrmA_AS"/>
</dbReference>
<dbReference type="InterPro" id="IPR012340">
    <property type="entry name" value="NA-bd_OB-fold"/>
</dbReference>
<dbReference type="InterPro" id="IPR029063">
    <property type="entry name" value="SAM-dependent_MTases_sf"/>
</dbReference>
<dbReference type="InterPro" id="IPR002792">
    <property type="entry name" value="TRAM_dom"/>
</dbReference>
<dbReference type="InterPro" id="IPR010280">
    <property type="entry name" value="U5_MeTrfase_fam"/>
</dbReference>
<dbReference type="NCBIfam" id="TIGR00479">
    <property type="entry name" value="rumA"/>
    <property type="match status" value="1"/>
</dbReference>
<dbReference type="PANTHER" id="PTHR11061">
    <property type="entry name" value="RNA M5U METHYLTRANSFERASE"/>
    <property type="match status" value="1"/>
</dbReference>
<dbReference type="PANTHER" id="PTHR11061:SF30">
    <property type="entry name" value="TRNA (URACIL(54)-C(5))-METHYLTRANSFERASE"/>
    <property type="match status" value="1"/>
</dbReference>
<dbReference type="Pfam" id="PF05958">
    <property type="entry name" value="tRNA_U5-meth_tr"/>
    <property type="match status" value="1"/>
</dbReference>
<dbReference type="SUPFAM" id="SSF50249">
    <property type="entry name" value="Nucleic acid-binding proteins"/>
    <property type="match status" value="1"/>
</dbReference>
<dbReference type="SUPFAM" id="SSF53335">
    <property type="entry name" value="S-adenosyl-L-methionine-dependent methyltransferases"/>
    <property type="match status" value="1"/>
</dbReference>
<dbReference type="PROSITE" id="PS51687">
    <property type="entry name" value="SAM_MT_RNA_M5U"/>
    <property type="match status" value="1"/>
</dbReference>
<dbReference type="PROSITE" id="PS50926">
    <property type="entry name" value="TRAM"/>
    <property type="match status" value="1"/>
</dbReference>
<dbReference type="PROSITE" id="PS01230">
    <property type="entry name" value="TRMA_1"/>
    <property type="match status" value="1"/>
</dbReference>
<protein>
    <recommendedName>
        <fullName>Uncharacterized RNA methyltransferase pc0248</fullName>
        <ecNumber>2.1.1.-</ecNumber>
    </recommendedName>
</protein>
<reference key="1">
    <citation type="journal article" date="2004" name="Science">
        <title>Illuminating the evolutionary history of chlamydiae.</title>
        <authorList>
            <person name="Horn M."/>
            <person name="Collingro A."/>
            <person name="Schmitz-Esser S."/>
            <person name="Beier C.L."/>
            <person name="Purkhold U."/>
            <person name="Fartmann B."/>
            <person name="Brandt P."/>
            <person name="Nyakatura G.J."/>
            <person name="Droege M."/>
            <person name="Frishman D."/>
            <person name="Rattei T."/>
            <person name="Mewes H.-W."/>
            <person name="Wagner M."/>
        </authorList>
    </citation>
    <scope>NUCLEOTIDE SEQUENCE [LARGE SCALE GENOMIC DNA]</scope>
    <source>
        <strain>UWE25</strain>
    </source>
</reference>
<organism>
    <name type="scientific">Protochlamydia amoebophila (strain UWE25)</name>
    <dbReference type="NCBI Taxonomy" id="264201"/>
    <lineage>
        <taxon>Bacteria</taxon>
        <taxon>Pseudomonadati</taxon>
        <taxon>Chlamydiota</taxon>
        <taxon>Chlamydiia</taxon>
        <taxon>Parachlamydiales</taxon>
        <taxon>Parachlamydiaceae</taxon>
        <taxon>Candidatus Protochlamydia</taxon>
    </lineage>
</organism>
<accession>Q6MEM7</accession>
<name>Y248_PARUW</name>
<proteinExistence type="inferred from homology"/>
<evidence type="ECO:0000250" key="1"/>
<evidence type="ECO:0000255" key="2">
    <source>
        <dbReference type="PROSITE-ProRule" id="PRU00208"/>
    </source>
</evidence>
<evidence type="ECO:0000255" key="3">
    <source>
        <dbReference type="PROSITE-ProRule" id="PRU01024"/>
    </source>
</evidence>
<comment type="similarity">
    <text evidence="3">Belongs to the class I-like SAM-binding methyltransferase superfamily. RNA M5U methyltransferase family.</text>
</comment>
<sequence>MTHLLTIHTQVEGEITALAFGGAGILRYHGFVIFVPFTAPGDQIICRIIEIKKSFAVAELVKLKQPSSLRVQPPCPYFGKCGGCQLQHLNEQTQLNYKLTAITDTLKRIGHLKVPSVEMNTAQLNWAYRRHITLHLKSFNQSFQAGYIATDHFSLISIDTCPIFNNLHDPIISILQKFISTLPNPNQQDGRLTLLKNQNSQYILSFQFCSLNELNRILFQEALEKYPIFSGILVTSPKKQWIIGNPYSEQKIENLIFRFTPQAFIQNHPEQSLYIYKKICSLTIQLKSKKILDLYCGFGITSLLLASQGHFVTGIEYNSDAIRFAKENSKLNHLPHVEFLEGDVEKILPICLKSQKCVDLVIVNPPRIGLSKSVIKILMSALPEDMIYISCMPSTLARDLSILCEDLYEIHECTAYDMFPQTSHVETLVHLKKV</sequence>
<gene>
    <name type="ordered locus">pc0248</name>
</gene>